<accession>P0DP22</accession>
<accession>P39387</accession>
<accession>P39388</accession>
<accession>Q2M5X5</accession>
<protein>
    <recommendedName>
        <fullName>Putative inactive recombination-promoting nuclease-like protein YjiQ</fullName>
    </recommendedName>
</protein>
<comment type="function">
    <text evidence="1 2 3 4">This pseudogene is the C-terminal fragment of low activity DNA endonuclease RpnD which probably yields 3'-hydroxyl ends (By similarity). The intact protein can be seen in this entry (AC B7NGZ6). Expression of the repaired protein increases the frequency of recA-independent recombination, but also decreases viability probably via DNA damage; in a RecA strain expression has no effect on viability but does induce the SOS repair response (PubMed:26162088, PubMed:26618540). May play a role in horizontal gene transfer (PubMed:26162088, PubMed:26618540, PubMed:28096446).</text>
</comment>
<comment type="similarity">
    <text evidence="6">Belongs to the Rpn/YhgA-like nuclease family.</text>
</comment>
<comment type="caution">
    <text evidence="2 6">Could be the product of a pseudogene. Experiments were performed with a repaired version of the protein (AC B7NGZ6) (PubMed:26162088).</text>
</comment>
<name>YJIQ_ECOLI</name>
<proteinExistence type="uncertain"/>
<organism>
    <name type="scientific">Escherichia coli (strain K12)</name>
    <dbReference type="NCBI Taxonomy" id="83333"/>
    <lineage>
        <taxon>Bacteria</taxon>
        <taxon>Pseudomonadati</taxon>
        <taxon>Pseudomonadota</taxon>
        <taxon>Gammaproteobacteria</taxon>
        <taxon>Enterobacterales</taxon>
        <taxon>Enterobacteriaceae</taxon>
        <taxon>Escherichia</taxon>
    </lineage>
</organism>
<feature type="chain" id="PRO_0000439834" description="Putative inactive recombination-promoting nuclease-like protein YjiQ">
    <location>
        <begin position="1"/>
        <end position="186"/>
    </location>
</feature>
<sequence length="186" mass="21769">MLFYHGSRSPYPWSLCWLDEFADPTTARKLYNAAFPLVDVTVVPDDEIVQHRRVALLELIQKHIRQRDLMGLIDQLVVLLVTECANDSQITALLNYILLTGDEARFNEFISELTRRMPQHRERIMTIAERIHNDGYIKGEQRILRLLLQNGADPEWIQKITGLSAEQMQALRQPLPERERYSWLKS</sequence>
<dbReference type="EMBL" id="U14003">
    <property type="protein sequence ID" value="AAA97235.1"/>
    <property type="molecule type" value="Genomic_DNA"/>
</dbReference>
<dbReference type="EMBL" id="U00096">
    <property type="status" value="NOT_ANNOTATED_CDS"/>
    <property type="molecule type" value="Genomic_DNA"/>
</dbReference>
<dbReference type="EMBL" id="AP009048">
    <property type="protein sequence ID" value="BAE78331.1"/>
    <property type="molecule type" value="Genomic_DNA"/>
</dbReference>
<dbReference type="PIR" id="S56564">
    <property type="entry name" value="S56564"/>
</dbReference>
<dbReference type="SMR" id="P0DP22"/>
<dbReference type="FunCoup" id="P0DP22">
    <property type="interactions" value="4"/>
</dbReference>
<dbReference type="KEGG" id="ecj:JW4302"/>
<dbReference type="eggNOG" id="COG5464">
    <property type="taxonomic scope" value="Bacteria"/>
</dbReference>
<dbReference type="HOGENOM" id="CLU_059548_7_0_6"/>
<dbReference type="InParanoid" id="P0DP22"/>
<dbReference type="Proteomes" id="UP000000625">
    <property type="component" value="Chromosome"/>
</dbReference>
<dbReference type="GO" id="GO:1990238">
    <property type="term" value="F:double-stranded DNA endonuclease activity"/>
    <property type="evidence" value="ECO:0000318"/>
    <property type="project" value="GO_Central"/>
</dbReference>
<dbReference type="GO" id="GO:0006310">
    <property type="term" value="P:DNA recombination"/>
    <property type="evidence" value="ECO:0000318"/>
    <property type="project" value="GO_Central"/>
</dbReference>
<dbReference type="InterPro" id="IPR051699">
    <property type="entry name" value="Rpn/YhgA-like_nuclease"/>
</dbReference>
<dbReference type="InterPro" id="IPR010106">
    <property type="entry name" value="RpnA"/>
</dbReference>
<dbReference type="InterPro" id="IPR006842">
    <property type="entry name" value="Transposase_31"/>
</dbReference>
<dbReference type="NCBIfam" id="TIGR01784">
    <property type="entry name" value="T_den_put_tspse"/>
    <property type="match status" value="1"/>
</dbReference>
<dbReference type="PANTHER" id="PTHR34611">
    <property type="match status" value="1"/>
</dbReference>
<dbReference type="PANTHER" id="PTHR34611:SF2">
    <property type="entry name" value="INACTIVE RECOMBINATION-PROMOTING NUCLEASE-LIKE PROTEIN RPNE-RELATED"/>
    <property type="match status" value="1"/>
</dbReference>
<dbReference type="Pfam" id="PF04754">
    <property type="entry name" value="Transposase_31"/>
    <property type="match status" value="1"/>
</dbReference>
<gene>
    <name type="primary">yjiQ</name>
    <name evidence="5" type="synonym">rpnD</name>
    <name type="ordered locus">b4339</name>
    <name type="ordered locus">JW4302</name>
</gene>
<keyword id="KW-1185">Reference proteome</keyword>
<reference key="1">
    <citation type="journal article" date="1995" name="Nucleic Acids Res.">
        <title>Analysis of the Escherichia coli genome VI: DNA sequence of the region from 92.8 through 100 minutes.</title>
        <authorList>
            <person name="Burland V.D."/>
            <person name="Plunkett G. III"/>
            <person name="Sofia H.J."/>
            <person name="Daniels D.L."/>
            <person name="Blattner F.R."/>
        </authorList>
    </citation>
    <scope>NUCLEOTIDE SEQUENCE [LARGE SCALE GENOMIC DNA]</scope>
    <source>
        <strain>K12 / MG1655 / ATCC 47076</strain>
    </source>
</reference>
<reference key="2">
    <citation type="journal article" date="1997" name="Science">
        <title>The complete genome sequence of Escherichia coli K-12.</title>
        <authorList>
            <person name="Blattner F.R."/>
            <person name="Plunkett G. III"/>
            <person name="Bloch C.A."/>
            <person name="Perna N.T."/>
            <person name="Burland V."/>
            <person name="Riley M."/>
            <person name="Collado-Vides J."/>
            <person name="Glasner J.D."/>
            <person name="Rode C.K."/>
            <person name="Mayhew G.F."/>
            <person name="Gregor J."/>
            <person name="Davis N.W."/>
            <person name="Kirkpatrick H.A."/>
            <person name="Goeden M.A."/>
            <person name="Rose D.J."/>
            <person name="Mau B."/>
            <person name="Shao Y."/>
        </authorList>
    </citation>
    <scope>NUCLEOTIDE SEQUENCE [LARGE SCALE GENOMIC DNA]</scope>
    <source>
        <strain>K12 / MG1655 / ATCC 47076</strain>
    </source>
</reference>
<reference key="3">
    <citation type="journal article" date="2006" name="Mol. Syst. Biol.">
        <title>Highly accurate genome sequences of Escherichia coli K-12 strains MG1655 and W3110.</title>
        <authorList>
            <person name="Hayashi K."/>
            <person name="Morooka N."/>
            <person name="Yamamoto Y."/>
            <person name="Fujita K."/>
            <person name="Isono K."/>
            <person name="Choi S."/>
            <person name="Ohtsubo E."/>
            <person name="Baba T."/>
            <person name="Wanner B.L."/>
            <person name="Mori H."/>
            <person name="Horiuchi T."/>
        </authorList>
    </citation>
    <scope>NUCLEOTIDE SEQUENCE [LARGE SCALE GENOMIC DNA]</scope>
    <source>
        <strain>K12 / W3110 / ATCC 27325 / DSM 5911</strain>
    </source>
</reference>
<reference key="4">
    <citation type="journal article" date="2015" name="PLoS ONE">
        <title>Novel recA-independent horizontal gene transfer in Escherichia coli K-12.</title>
        <authorList>
            <person name="Kingston A.W."/>
            <person name="Roussel-Rossin C."/>
            <person name="Dupont C."/>
            <person name="Raleigh E.A."/>
        </authorList>
    </citation>
    <scope>FUNCTION</scope>
    <source>
        <strain>K12</strain>
    </source>
</reference>
<reference key="5">
    <citation type="journal article" date="2015" name="PLoS ONE">
        <title>Correction: Novel recA-independent horizontal gene transfer in Escherichia coli K-12.</title>
        <authorList>
            <person name="Kingston A.W."/>
            <person name="Roussel-Rossin C."/>
            <person name="Dupont C."/>
            <person name="Raleigh E.A."/>
        </authorList>
    </citation>
    <scope>ERRATUM OF PUBMED:26162088</scope>
</reference>
<reference key="6">
    <citation type="journal article" date="2017" name="J. Bacteriol.">
        <title>The Rpn (YhgA-like) proteins of Escherichia coli K-12 and their contribution to RecA-independent horizontal transfer.</title>
        <authorList>
            <person name="Kingston A.W."/>
            <person name="Ponkratz C."/>
            <person name="Raleigh E.A."/>
        </authorList>
    </citation>
    <scope>FUNCTION</scope>
    <source>
        <strain>K12</strain>
    </source>
</reference>
<evidence type="ECO:0000250" key="1">
    <source>
        <dbReference type="UniProtKB" id="P31667"/>
    </source>
</evidence>
<evidence type="ECO:0000269" key="2">
    <source>
    </source>
</evidence>
<evidence type="ECO:0000269" key="3">
    <source>
    </source>
</evidence>
<evidence type="ECO:0000269" key="4">
    <source>
    </source>
</evidence>
<evidence type="ECO:0000303" key="5">
    <source>
    </source>
</evidence>
<evidence type="ECO:0000305" key="6"/>